<proteinExistence type="inferred from homology"/>
<feature type="chain" id="PRO_1000021879" description="Homoserine O-succinyltransferase">
    <location>
        <begin position="1"/>
        <end position="385"/>
    </location>
</feature>
<feature type="domain" description="AB hydrolase-1" evidence="1">
    <location>
        <begin position="51"/>
        <end position="360"/>
    </location>
</feature>
<feature type="active site" description="Nucleophile" evidence="1">
    <location>
        <position position="157"/>
    </location>
</feature>
<feature type="active site" evidence="1">
    <location>
        <position position="323"/>
    </location>
</feature>
<feature type="active site" evidence="1">
    <location>
        <position position="356"/>
    </location>
</feature>
<feature type="binding site" evidence="1">
    <location>
        <position position="227"/>
    </location>
    <ligand>
        <name>substrate</name>
    </ligand>
</feature>
<feature type="binding site" evidence="1">
    <location>
        <position position="357"/>
    </location>
    <ligand>
        <name>substrate</name>
    </ligand>
</feature>
<feature type="site" description="Important for acyl-CoA specificity" evidence="1">
    <location>
        <position position="325"/>
    </location>
</feature>
<dbReference type="EC" id="2.3.1.46" evidence="1"/>
<dbReference type="EMBL" id="CP000155">
    <property type="protein sequence ID" value="ABC33004.1"/>
    <property type="molecule type" value="Genomic_DNA"/>
</dbReference>
<dbReference type="RefSeq" id="WP_011400058.1">
    <property type="nucleotide sequence ID" value="NC_007645.1"/>
</dbReference>
<dbReference type="SMR" id="Q2S8M0"/>
<dbReference type="STRING" id="349521.HCH_06359"/>
<dbReference type="ESTHER" id="hahch-q2s8m0">
    <property type="family name" value="Homoserine_transacetylase"/>
</dbReference>
<dbReference type="KEGG" id="hch:HCH_06359"/>
<dbReference type="eggNOG" id="COG2021">
    <property type="taxonomic scope" value="Bacteria"/>
</dbReference>
<dbReference type="HOGENOM" id="CLU_028760_1_2_6"/>
<dbReference type="OrthoDB" id="9800754at2"/>
<dbReference type="UniPathway" id="UPA00051">
    <property type="reaction ID" value="UER00075"/>
</dbReference>
<dbReference type="Proteomes" id="UP000000238">
    <property type="component" value="Chromosome"/>
</dbReference>
<dbReference type="GO" id="GO:0005737">
    <property type="term" value="C:cytoplasm"/>
    <property type="evidence" value="ECO:0007669"/>
    <property type="project" value="UniProtKB-SubCell"/>
</dbReference>
<dbReference type="GO" id="GO:0004414">
    <property type="term" value="F:homoserine O-acetyltransferase activity"/>
    <property type="evidence" value="ECO:0007669"/>
    <property type="project" value="TreeGrafter"/>
</dbReference>
<dbReference type="GO" id="GO:0008899">
    <property type="term" value="F:homoserine O-succinyltransferase activity"/>
    <property type="evidence" value="ECO:0007669"/>
    <property type="project" value="UniProtKB-UniRule"/>
</dbReference>
<dbReference type="GO" id="GO:0009092">
    <property type="term" value="P:homoserine metabolic process"/>
    <property type="evidence" value="ECO:0007669"/>
    <property type="project" value="TreeGrafter"/>
</dbReference>
<dbReference type="GO" id="GO:0009086">
    <property type="term" value="P:methionine biosynthetic process"/>
    <property type="evidence" value="ECO:0007669"/>
    <property type="project" value="UniProtKB-UniRule"/>
</dbReference>
<dbReference type="FunFam" id="1.10.1740.110:FF:000001">
    <property type="entry name" value="Homoserine O-acetyltransferase"/>
    <property type="match status" value="1"/>
</dbReference>
<dbReference type="Gene3D" id="1.10.1740.110">
    <property type="match status" value="1"/>
</dbReference>
<dbReference type="Gene3D" id="3.40.50.1820">
    <property type="entry name" value="alpha/beta hydrolase"/>
    <property type="match status" value="1"/>
</dbReference>
<dbReference type="HAMAP" id="MF_00296">
    <property type="entry name" value="MetX_acyltransf"/>
    <property type="match status" value="1"/>
</dbReference>
<dbReference type="InterPro" id="IPR000073">
    <property type="entry name" value="AB_hydrolase_1"/>
</dbReference>
<dbReference type="InterPro" id="IPR029058">
    <property type="entry name" value="AB_hydrolase_fold"/>
</dbReference>
<dbReference type="InterPro" id="IPR008220">
    <property type="entry name" value="HAT_MetX-like"/>
</dbReference>
<dbReference type="NCBIfam" id="TIGR01392">
    <property type="entry name" value="homoserO_Ac_trn"/>
    <property type="match status" value="1"/>
</dbReference>
<dbReference type="NCBIfam" id="NF001209">
    <property type="entry name" value="PRK00175.1"/>
    <property type="match status" value="1"/>
</dbReference>
<dbReference type="PANTHER" id="PTHR32268">
    <property type="entry name" value="HOMOSERINE O-ACETYLTRANSFERASE"/>
    <property type="match status" value="1"/>
</dbReference>
<dbReference type="PANTHER" id="PTHR32268:SF11">
    <property type="entry name" value="HOMOSERINE O-ACETYLTRANSFERASE"/>
    <property type="match status" value="1"/>
</dbReference>
<dbReference type="Pfam" id="PF00561">
    <property type="entry name" value="Abhydrolase_1"/>
    <property type="match status" value="1"/>
</dbReference>
<dbReference type="PIRSF" id="PIRSF000443">
    <property type="entry name" value="Homoser_Ac_trans"/>
    <property type="match status" value="1"/>
</dbReference>
<dbReference type="SUPFAM" id="SSF53474">
    <property type="entry name" value="alpha/beta-Hydrolases"/>
    <property type="match status" value="1"/>
</dbReference>
<sequence length="385" mass="42736">MPEVIPPDSVGIVTPQVAQFDIPLTLECGKQLNSFQLMYETYGELNADRSNAVLICHALSGHHHAAGYHSMEDSKPGWWDSCIGPGKPIDTNKFFVVSLNNLGGCAGSTGPASINPETGKAYGPDFPVVTVQDWVRSQAMLADRLNIPHWAAVIGGSLGGMQALQWSIEYPERVHNAAVIASTPRLSAQNIAFNEVARKAITSDPNFYEGRYGEHTTYPDKGLMLARMVGHITYLSNASMGEKFGRDLRAQTLKFGLLDVQFEVESYLHYQGERFSKNFDANTYLLMTRALDYFDPARAHEGDLSKALEPAKCKYLVVSFTTDWRFPPDRSEELVNAMVEAKKSVSYAEVDSPHGHDAFLIPTQRYMDVFHGFMGRVAKEIPHAR</sequence>
<protein>
    <recommendedName>
        <fullName evidence="1">Homoserine O-succinyltransferase</fullName>
        <shortName evidence="1">HST</shortName>
        <ecNumber evidence="1">2.3.1.46</ecNumber>
    </recommendedName>
    <alternativeName>
        <fullName evidence="1">Homoserine transsuccinylase</fullName>
        <shortName evidence="1">HTS</shortName>
    </alternativeName>
</protein>
<reference key="1">
    <citation type="journal article" date="2005" name="Nucleic Acids Res.">
        <title>Genomic blueprint of Hahella chejuensis, a marine microbe producing an algicidal agent.</title>
        <authorList>
            <person name="Jeong H."/>
            <person name="Yim J.H."/>
            <person name="Lee C."/>
            <person name="Choi S.-H."/>
            <person name="Park Y.K."/>
            <person name="Yoon S.H."/>
            <person name="Hur C.-G."/>
            <person name="Kang H.-Y."/>
            <person name="Kim D."/>
            <person name="Lee H.H."/>
            <person name="Park K.H."/>
            <person name="Park S.-H."/>
            <person name="Park H.-S."/>
            <person name="Lee H.K."/>
            <person name="Oh T.K."/>
            <person name="Kim J.F."/>
        </authorList>
    </citation>
    <scope>NUCLEOTIDE SEQUENCE [LARGE SCALE GENOMIC DNA]</scope>
    <source>
        <strain>KCTC 2396</strain>
    </source>
</reference>
<keyword id="KW-0012">Acyltransferase</keyword>
<keyword id="KW-0028">Amino-acid biosynthesis</keyword>
<keyword id="KW-0963">Cytoplasm</keyword>
<keyword id="KW-0486">Methionine biosynthesis</keyword>
<keyword id="KW-1185">Reference proteome</keyword>
<keyword id="KW-0808">Transferase</keyword>
<evidence type="ECO:0000255" key="1">
    <source>
        <dbReference type="HAMAP-Rule" id="MF_00296"/>
    </source>
</evidence>
<comment type="function">
    <text evidence="1">Transfers a succinyl group from succinyl-CoA to L-homoserine, forming succinyl-L-homoserine.</text>
</comment>
<comment type="catalytic activity">
    <reaction evidence="1">
        <text>L-homoserine + succinyl-CoA = O-succinyl-L-homoserine + CoA</text>
        <dbReference type="Rhea" id="RHEA:22008"/>
        <dbReference type="ChEBI" id="CHEBI:57287"/>
        <dbReference type="ChEBI" id="CHEBI:57292"/>
        <dbReference type="ChEBI" id="CHEBI:57476"/>
        <dbReference type="ChEBI" id="CHEBI:57661"/>
        <dbReference type="EC" id="2.3.1.46"/>
    </reaction>
</comment>
<comment type="pathway">
    <text evidence="1">Amino-acid biosynthesis; L-methionine biosynthesis via de novo pathway; O-succinyl-L-homoserine from L-homoserine: step 1/1.</text>
</comment>
<comment type="subunit">
    <text evidence="1">Homodimer.</text>
</comment>
<comment type="subcellular location">
    <subcellularLocation>
        <location evidence="1">Cytoplasm</location>
    </subcellularLocation>
</comment>
<comment type="similarity">
    <text evidence="1">Belongs to the AB hydrolase superfamily. MetX family.</text>
</comment>
<accession>Q2S8M0</accession>
<name>METXS_HAHCH</name>
<gene>
    <name evidence="1" type="primary">metXS</name>
    <name type="ordered locus">HCH_06359</name>
</gene>
<organism>
    <name type="scientific">Hahella chejuensis (strain KCTC 2396)</name>
    <dbReference type="NCBI Taxonomy" id="349521"/>
    <lineage>
        <taxon>Bacteria</taxon>
        <taxon>Pseudomonadati</taxon>
        <taxon>Pseudomonadota</taxon>
        <taxon>Gammaproteobacteria</taxon>
        <taxon>Oceanospirillales</taxon>
        <taxon>Hahellaceae</taxon>
        <taxon>Hahella</taxon>
    </lineage>
</organism>